<protein>
    <recommendedName>
        <fullName evidence="10">Agamous-like MADS-box protein AGL70</fullName>
    </recommendedName>
    <alternativeName>
        <fullName evidence="10">MADS box FLC1-like nuclear protein 3</fullName>
    </alternativeName>
    <alternativeName>
        <fullName evidence="10">Protein AGAMOUS-like 70</fullName>
    </alternativeName>
    <alternativeName>
        <fullName evidence="9">Protein MADS AFFECTING FLOWERING 3</fullName>
    </alternativeName>
</protein>
<evidence type="ECO:0000255" key="1">
    <source>
        <dbReference type="PROSITE-ProRule" id="PRU00251"/>
    </source>
</evidence>
<evidence type="ECO:0000255" key="2">
    <source>
        <dbReference type="PROSITE-ProRule" id="PRU00629"/>
    </source>
</evidence>
<evidence type="ECO:0000255" key="3">
    <source>
        <dbReference type="PROSITE-ProRule" id="PRU00768"/>
    </source>
</evidence>
<evidence type="ECO:0000269" key="4">
    <source>
    </source>
</evidence>
<evidence type="ECO:0000269" key="5">
    <source>
    </source>
</evidence>
<evidence type="ECO:0000269" key="6">
    <source>
    </source>
</evidence>
<evidence type="ECO:0000269" key="7">
    <source>
    </source>
</evidence>
<evidence type="ECO:0000269" key="8">
    <source>
    </source>
</evidence>
<evidence type="ECO:0000303" key="9">
    <source>
    </source>
</evidence>
<evidence type="ECO:0000303" key="10">
    <source>
    </source>
</evidence>
<evidence type="ECO:0000312" key="11">
    <source>
        <dbReference type="Araport" id="AT5G65060"/>
    </source>
</evidence>
<evidence type="ECO:0000312" key="12">
    <source>
        <dbReference type="EMBL" id="BAA97510.1"/>
    </source>
</evidence>
<accession>Q9LSR7</accession>
<sequence length="196" mass="22129">MGRRKVEIKRIENKSSRQVTFSKRRKGLIEKARQLSILCESSIAVVAVSGSGKLYDSASGDNMSKIIDRYEIHHADELKALDLAEKIRNYLPHKELLEIVQSKLEESNVDNVSVDSLISMEEQLETALSVIRAKKTELMMEDMKSLQEREKLLIEENQILASQVGKKTFLVIEGDRGMSRENGSGNKVPETLSLLK</sequence>
<organism>
    <name type="scientific">Arabidopsis thaliana</name>
    <name type="common">Mouse-ear cress</name>
    <dbReference type="NCBI Taxonomy" id="3702"/>
    <lineage>
        <taxon>Eukaryota</taxon>
        <taxon>Viridiplantae</taxon>
        <taxon>Streptophyta</taxon>
        <taxon>Embryophyta</taxon>
        <taxon>Tracheophyta</taxon>
        <taxon>Spermatophyta</taxon>
        <taxon>Magnoliopsida</taxon>
        <taxon>eudicotyledons</taxon>
        <taxon>Gunneridae</taxon>
        <taxon>Pentapetalae</taxon>
        <taxon>rosids</taxon>
        <taxon>malvids</taxon>
        <taxon>Brassicales</taxon>
        <taxon>Brassicaceae</taxon>
        <taxon>Camelineae</taxon>
        <taxon>Arabidopsis</taxon>
    </lineage>
</organism>
<dbReference type="EMBL" id="AY231445">
    <property type="protein sequence ID" value="AAO65310.1"/>
    <property type="molecule type" value="mRNA"/>
</dbReference>
<dbReference type="EMBL" id="EU980617">
    <property type="protein sequence ID" value="ACL93409.1"/>
    <property type="molecule type" value="Genomic_DNA"/>
</dbReference>
<dbReference type="EMBL" id="EU980619">
    <property type="protein sequence ID" value="ACL93416.1"/>
    <property type="molecule type" value="Genomic_DNA"/>
</dbReference>
<dbReference type="EMBL" id="EU980621">
    <property type="protein sequence ID" value="ACL93423.1"/>
    <property type="molecule type" value="Genomic_DNA"/>
</dbReference>
<dbReference type="EMBL" id="EU980626">
    <property type="protein sequence ID" value="ACL93443.1"/>
    <property type="molecule type" value="Genomic_DNA"/>
</dbReference>
<dbReference type="EMBL" id="AB026633">
    <property type="protein sequence ID" value="BAA97510.1"/>
    <property type="molecule type" value="Genomic_DNA"/>
</dbReference>
<dbReference type="EMBL" id="CP002688">
    <property type="protein sequence ID" value="AED97993.1"/>
    <property type="molecule type" value="Genomic_DNA"/>
</dbReference>
<dbReference type="RefSeq" id="NP_201311.1">
    <property type="nucleotide sequence ID" value="NM_125905.4"/>
</dbReference>
<dbReference type="SMR" id="Q9LSR7"/>
<dbReference type="FunCoup" id="Q9LSR7">
    <property type="interactions" value="54"/>
</dbReference>
<dbReference type="STRING" id="3702.Q9LSR7"/>
<dbReference type="PaxDb" id="3702-AT5G65060.1"/>
<dbReference type="EnsemblPlants" id="AT5G65060.1">
    <property type="protein sequence ID" value="AT5G65060.1"/>
    <property type="gene ID" value="AT5G65060"/>
</dbReference>
<dbReference type="GeneID" id="836630"/>
<dbReference type="Gramene" id="AT5G65060.1">
    <property type="protein sequence ID" value="AT5G65060.1"/>
    <property type="gene ID" value="AT5G65060"/>
</dbReference>
<dbReference type="KEGG" id="ath:AT5G65060"/>
<dbReference type="Araport" id="AT5G65060"/>
<dbReference type="TAIR" id="AT5G65060">
    <property type="gene designation" value="MAF3"/>
</dbReference>
<dbReference type="eggNOG" id="KOG0014">
    <property type="taxonomic scope" value="Eukaryota"/>
</dbReference>
<dbReference type="InParanoid" id="Q9LSR7"/>
<dbReference type="PhylomeDB" id="Q9LSR7"/>
<dbReference type="PRO" id="PR:Q9LSR7"/>
<dbReference type="Proteomes" id="UP000006548">
    <property type="component" value="Chromosome 5"/>
</dbReference>
<dbReference type="ExpressionAtlas" id="Q9LSR7">
    <property type="expression patterns" value="baseline and differential"/>
</dbReference>
<dbReference type="GO" id="GO:0005634">
    <property type="term" value="C:nucleus"/>
    <property type="evidence" value="ECO:0007669"/>
    <property type="project" value="UniProtKB-SubCell"/>
</dbReference>
<dbReference type="GO" id="GO:0003677">
    <property type="term" value="F:DNA binding"/>
    <property type="evidence" value="ECO:0007669"/>
    <property type="project" value="UniProtKB-KW"/>
</dbReference>
<dbReference type="GO" id="GO:0003700">
    <property type="term" value="F:DNA-binding transcription factor activity"/>
    <property type="evidence" value="ECO:0000250"/>
    <property type="project" value="TAIR"/>
</dbReference>
<dbReference type="GO" id="GO:0046983">
    <property type="term" value="F:protein dimerization activity"/>
    <property type="evidence" value="ECO:0007669"/>
    <property type="project" value="InterPro"/>
</dbReference>
<dbReference type="GO" id="GO:0009910">
    <property type="term" value="P:negative regulation of flower development"/>
    <property type="evidence" value="ECO:0000315"/>
    <property type="project" value="TAIR"/>
</dbReference>
<dbReference type="GO" id="GO:2000028">
    <property type="term" value="P:regulation of photoperiodism, flowering"/>
    <property type="evidence" value="ECO:0000314"/>
    <property type="project" value="UniProtKB"/>
</dbReference>
<dbReference type="GO" id="GO:0010048">
    <property type="term" value="P:vernalization response"/>
    <property type="evidence" value="ECO:0000314"/>
    <property type="project" value="UniProtKB"/>
</dbReference>
<dbReference type="FunFam" id="3.40.1810.10:FF:000020">
    <property type="entry name" value="MADS-box protein FLOWERING LOCUS C"/>
    <property type="match status" value="1"/>
</dbReference>
<dbReference type="Gene3D" id="3.40.1810.10">
    <property type="entry name" value="Transcription factor, MADS-box"/>
    <property type="match status" value="1"/>
</dbReference>
<dbReference type="InterPro" id="IPR050142">
    <property type="entry name" value="MADS-box/MEF2_TF"/>
</dbReference>
<dbReference type="InterPro" id="IPR002487">
    <property type="entry name" value="TF_Kbox"/>
</dbReference>
<dbReference type="InterPro" id="IPR002100">
    <property type="entry name" value="TF_MADSbox"/>
</dbReference>
<dbReference type="InterPro" id="IPR036879">
    <property type="entry name" value="TF_MADSbox_sf"/>
</dbReference>
<dbReference type="PANTHER" id="PTHR48019">
    <property type="entry name" value="SERUM RESPONSE FACTOR HOMOLOG"/>
    <property type="match status" value="1"/>
</dbReference>
<dbReference type="Pfam" id="PF01486">
    <property type="entry name" value="K-box"/>
    <property type="match status" value="1"/>
</dbReference>
<dbReference type="Pfam" id="PF00319">
    <property type="entry name" value="SRF-TF"/>
    <property type="match status" value="1"/>
</dbReference>
<dbReference type="PRINTS" id="PR00404">
    <property type="entry name" value="MADSDOMAIN"/>
</dbReference>
<dbReference type="SMART" id="SM00432">
    <property type="entry name" value="MADS"/>
    <property type="match status" value="1"/>
</dbReference>
<dbReference type="SUPFAM" id="SSF55455">
    <property type="entry name" value="SRF-like"/>
    <property type="match status" value="1"/>
</dbReference>
<dbReference type="PROSITE" id="PS51297">
    <property type="entry name" value="K_BOX"/>
    <property type="match status" value="1"/>
</dbReference>
<dbReference type="PROSITE" id="PS50066">
    <property type="entry name" value="MADS_BOX_2"/>
    <property type="match status" value="1"/>
</dbReference>
<keyword id="KW-0238">DNA-binding</keyword>
<keyword id="KW-0539">Nucleus</keyword>
<keyword id="KW-1185">Reference proteome</keyword>
<keyword id="KW-0804">Transcription</keyword>
<keyword id="KW-0805">Transcription regulation</keyword>
<proteinExistence type="evidence at transcript level"/>
<feature type="chain" id="PRO_0000441234" description="Agamous-like MADS-box protein AGL70">
    <location>
        <begin position="1"/>
        <end position="196"/>
    </location>
</feature>
<feature type="domain" description="MADS-box" evidence="1">
    <location>
        <begin position="1"/>
        <end position="61"/>
    </location>
</feature>
<feature type="domain" description="K-box" evidence="2">
    <location>
        <begin position="80"/>
        <end position="170"/>
    </location>
</feature>
<feature type="short sequence motif" description="Nuclear localization signal" evidence="3">
    <location>
        <begin position="8"/>
        <end position="15"/>
    </location>
</feature>
<name>AGL70_ARATH</name>
<reference key="1">
    <citation type="journal article" date="2003" name="Plant Cell">
        <title>Analysis of the Arabidopsis MADS AFFECTING FLOWERING gene family: MAF2 prevents vernalization by short periods of cold.</title>
        <authorList>
            <person name="Ratcliffe O.J."/>
            <person name="Kumimoto R.W."/>
            <person name="Wong B.J."/>
            <person name="Riechmann J.L."/>
        </authorList>
    </citation>
    <scope>NUCLEOTIDE SEQUENCE [MRNA]</scope>
    <scope>FUNCTION</scope>
    <scope>REPRESSION BY VERNALIZATION</scope>
    <source>
        <strain>cv. Columbia</strain>
        <strain>cv. Landsberg erecta</strain>
    </source>
</reference>
<reference key="2">
    <citation type="journal article" date="2009" name="Mol. Biol. Evol.">
        <title>Complex rearrangements lead to novel chimeric gene fusion polymorphisms at the Arabidopsis thaliana MAF2-5 flowering time gene cluster.</title>
        <authorList>
            <person name="Caicedo A.L."/>
            <person name="Richards C."/>
            <person name="Ehrenreich I.M."/>
            <person name="Purugganan M.D."/>
        </authorList>
    </citation>
    <scope>NUCLEOTIDE SEQUENCE [GENOMIC DNA]</scope>
    <source>
        <strain>cv. Hau-0</strain>
        <strain>cv. Li-8</strain>
        <strain>cv. Nd-0</strain>
    </source>
</reference>
<reference key="3">
    <citation type="submission" date="1999-04" db="EMBL/GenBank/DDBJ databases">
        <title>Structural analysis of Arabidopsis thaliana chromosome 5. XI.</title>
        <authorList>
            <person name="Kaneko T."/>
            <person name="Katoh T."/>
            <person name="Asamizu E."/>
            <person name="Sato S."/>
            <person name="Nakamura Y."/>
            <person name="Kotani H."/>
            <person name="Tabata S."/>
        </authorList>
    </citation>
    <scope>NUCLEOTIDE SEQUENCE [LARGE SCALE GENOMIC DNA]</scope>
    <source>
        <strain>cv. Columbia</strain>
    </source>
</reference>
<reference key="4">
    <citation type="journal article" date="2017" name="Plant J.">
        <title>Araport11: a complete reannotation of the Arabidopsis thaliana reference genome.</title>
        <authorList>
            <person name="Cheng C.Y."/>
            <person name="Krishnakumar V."/>
            <person name="Chan A.P."/>
            <person name="Thibaud-Nissen F."/>
            <person name="Schobel S."/>
            <person name="Town C.D."/>
        </authorList>
    </citation>
    <scope>GENOME REANNOTATION</scope>
    <source>
        <strain>cv. Columbia</strain>
    </source>
</reference>
<reference key="5">
    <citation type="journal article" date="2003" name="Mol. Biol. Evol.">
        <title>Evolution and divergence of the MADS-box gene family based on genome-wide expression analyses.</title>
        <authorList>
            <person name="Kofuji R."/>
            <person name="Sumikawa N."/>
            <person name="Yamasaki M."/>
            <person name="Kondo K."/>
            <person name="Ueda K."/>
            <person name="Ito M."/>
            <person name="Hasebe M."/>
        </authorList>
    </citation>
    <scope>TISSUE SPECIFICITY</scope>
    <scope>GENE FAMILY</scope>
    <source>
        <strain>cv. Columbia</strain>
    </source>
</reference>
<reference key="6">
    <citation type="journal article" date="2003" name="Plant Cell">
        <title>Molecular and phylogenetic analyses of the complete MADS-box transcription factor family in Arabidopsis: new openings to the MADS world.</title>
        <authorList>
            <person name="Parenicova L."/>
            <person name="de Folter S."/>
            <person name="Kieffer M."/>
            <person name="Horner D.S."/>
            <person name="Favalli C."/>
            <person name="Busscher J."/>
            <person name="Cook H.E."/>
            <person name="Ingram R.M."/>
            <person name="Kater M.M."/>
            <person name="Davies B."/>
            <person name="Angenent G.C."/>
            <person name="Colombo L."/>
        </authorList>
    </citation>
    <scope>TISSUE SPECIFICITY</scope>
    <scope>GENE FAMILY</scope>
    <source>
        <strain>cv. Columbia</strain>
    </source>
</reference>
<reference key="7">
    <citation type="journal article" date="2006" name="Genetics">
        <title>Nonadditive regulation of FRI and FLC loci mediates flowering-time variation in Arabidopsis allopolyploids.</title>
        <authorList>
            <person name="Wang J."/>
            <person name="Tian L."/>
            <person name="Lee H.S."/>
            <person name="Chen Z.J."/>
        </authorList>
    </citation>
    <scope>GENE FAMILY</scope>
</reference>
<reference key="8">
    <citation type="journal article" date="2012" name="PLoS ONE">
        <title>Predicting the impact of alternative splicing on plant MADS domain protein function.</title>
        <authorList>
            <person name="Severing E.I."/>
            <person name="van Dijk A.D.J."/>
            <person name="Morabito G."/>
            <person name="Busscher-Lange J."/>
            <person name="Immink R.G.H."/>
            <person name="van Ham R.C.H.J."/>
        </authorList>
    </citation>
    <scope>GENE FAMILY</scope>
</reference>
<reference key="9">
    <citation type="journal article" date="2013" name="J. Plant Physiol.">
        <title>Requirement of histone acetyltransferases HAM1 and HAM2 for epigenetic modification of FLC in regulating flowering in Arabidopsis.</title>
        <authorList>
            <person name="Xiao J."/>
            <person name="Zhang H."/>
            <person name="Xing L."/>
            <person name="Xu S."/>
            <person name="Liu H."/>
            <person name="Chong K."/>
            <person name="Xu Y."/>
        </authorList>
    </citation>
    <scope>REGULATION BY HAM1 AND HAM2</scope>
    <source>
        <strain>cv. C24</strain>
        <strain>cv. Columbia</strain>
    </source>
</reference>
<reference key="10">
    <citation type="journal article" date="2014" name="Plant Physiol.">
        <title>Gene regulatory variation mediates flowering responses to vernalization along an altitudinal gradient in Arabidopsis.</title>
        <authorList>
            <person name="Suter L."/>
            <person name="Rueegg M."/>
            <person name="Zemp N."/>
            <person name="Hennig L."/>
            <person name="Widmer A."/>
        </authorList>
    </citation>
    <scope>FUNCTION</scope>
    <source>
        <strain>cv. Col-FRI</strain>
        <strain>cv. Columbia</strain>
    </source>
</reference>
<gene>
    <name evidence="10" type="primary">AGL70</name>
    <name evidence="10" type="synonym">FCL3</name>
    <name evidence="9" type="synonym">MAF3</name>
    <name evidence="11" type="ordered locus">At5g65060</name>
    <name evidence="12" type="ORF">F15O5.2</name>
</gene>
<comment type="function">
    <text evidence="4 8">Probable transcription factor involved in the negative regulation of flowering time, probably through the photoperiodic and vernalization pathways; more efficient in cv. Landsberg erecta than in cv. Columbia background. Prevents premature flowering (PubMed:12724541, PubMed:25339407). Involved in the modulation of vernalization impact on flowering according to genotype acclimation to altitude (PubMed:25339407).</text>
</comment>
<comment type="subcellular location">
    <subcellularLocation>
        <location evidence="1 3">Nucleus</location>
    </subcellularLocation>
</comment>
<comment type="tissue specificity">
    <text evidence="5 6">Mostly expressed in roots, leaves and flowers, and, to a lower extent, in inflorescence, siliques, pollen and shoots.</text>
</comment>
<comment type="induction">
    <text evidence="4 7">Repressed during vernalization (PubMed:12724541). Regulated by HAM1 and HAM2 via epigenetic modification of chromatins at H4K5 acetylation during flowering (PubMed:23273925).</text>
</comment>